<name>METJ_YERPY</name>
<organism>
    <name type="scientific">Yersinia pseudotuberculosis serotype O:3 (strain YPIII)</name>
    <dbReference type="NCBI Taxonomy" id="502800"/>
    <lineage>
        <taxon>Bacteria</taxon>
        <taxon>Pseudomonadati</taxon>
        <taxon>Pseudomonadota</taxon>
        <taxon>Gammaproteobacteria</taxon>
        <taxon>Enterobacterales</taxon>
        <taxon>Yersiniaceae</taxon>
        <taxon>Yersinia</taxon>
    </lineage>
</organism>
<evidence type="ECO:0000255" key="1">
    <source>
        <dbReference type="HAMAP-Rule" id="MF_00744"/>
    </source>
</evidence>
<accession>B1JQ68</accession>
<sequence>MAEWNGEYVSPYAEHGKKSEQVKKITVSIPLKVLKILTDERTRRQVNNLRHATNSELLCEAFLHAFTGQPLPNDEDLRKERSDEIPEAAKILMRELGVDPDTWEY</sequence>
<gene>
    <name evidence="1" type="primary">metJ</name>
    <name type="ordered locus">YPK_4096</name>
</gene>
<feature type="chain" id="PRO_1000133226" description="Met repressor">
    <location>
        <begin position="1"/>
        <end position="105"/>
    </location>
</feature>
<comment type="function">
    <text evidence="1">This regulatory protein, when combined with SAM (S-adenosylmethionine) represses the expression of the methionine regulon and of enzymes involved in SAM synthesis.</text>
</comment>
<comment type="subunit">
    <text evidence="1">Homodimer.</text>
</comment>
<comment type="subcellular location">
    <subcellularLocation>
        <location evidence="1">Cytoplasm</location>
    </subcellularLocation>
</comment>
<comment type="domain">
    <text>Does not bind DNA by a helix-turn-helix motif.</text>
</comment>
<comment type="similarity">
    <text evidence="1">Belongs to the MetJ family.</text>
</comment>
<reference key="1">
    <citation type="submission" date="2008-02" db="EMBL/GenBank/DDBJ databases">
        <title>Complete sequence of Yersinia pseudotuberculosis YPIII.</title>
        <authorList>
            <consortium name="US DOE Joint Genome Institute"/>
            <person name="Copeland A."/>
            <person name="Lucas S."/>
            <person name="Lapidus A."/>
            <person name="Glavina del Rio T."/>
            <person name="Dalin E."/>
            <person name="Tice H."/>
            <person name="Bruce D."/>
            <person name="Goodwin L."/>
            <person name="Pitluck S."/>
            <person name="Munk A.C."/>
            <person name="Brettin T."/>
            <person name="Detter J.C."/>
            <person name="Han C."/>
            <person name="Tapia R."/>
            <person name="Schmutz J."/>
            <person name="Larimer F."/>
            <person name="Land M."/>
            <person name="Hauser L."/>
            <person name="Challacombe J.F."/>
            <person name="Green L."/>
            <person name="Lindler L.E."/>
            <person name="Nikolich M.P."/>
            <person name="Richardson P."/>
        </authorList>
    </citation>
    <scope>NUCLEOTIDE SEQUENCE [LARGE SCALE GENOMIC DNA]</scope>
    <source>
        <strain>YPIII</strain>
    </source>
</reference>
<keyword id="KW-0028">Amino-acid biosynthesis</keyword>
<keyword id="KW-0963">Cytoplasm</keyword>
<keyword id="KW-0238">DNA-binding</keyword>
<keyword id="KW-0486">Methionine biosynthesis</keyword>
<keyword id="KW-0678">Repressor</keyword>
<keyword id="KW-0804">Transcription</keyword>
<keyword id="KW-0805">Transcription regulation</keyword>
<proteinExistence type="inferred from homology"/>
<protein>
    <recommendedName>
        <fullName evidence="1">Met repressor</fullName>
    </recommendedName>
    <alternativeName>
        <fullName evidence="1">Met regulon regulatory protein MetJ</fullName>
    </alternativeName>
</protein>
<dbReference type="EMBL" id="CP000950">
    <property type="protein sequence ID" value="ACA70355.1"/>
    <property type="molecule type" value="Genomic_DNA"/>
</dbReference>
<dbReference type="RefSeq" id="WP_004392248.1">
    <property type="nucleotide sequence ID" value="NZ_CP009792.1"/>
</dbReference>
<dbReference type="SMR" id="B1JQ68"/>
<dbReference type="GeneID" id="97458248"/>
<dbReference type="KEGG" id="ypy:YPK_4096"/>
<dbReference type="PATRIC" id="fig|502800.11.peg.444"/>
<dbReference type="GO" id="GO:0005737">
    <property type="term" value="C:cytoplasm"/>
    <property type="evidence" value="ECO:0007669"/>
    <property type="project" value="UniProtKB-SubCell"/>
</dbReference>
<dbReference type="GO" id="GO:0003677">
    <property type="term" value="F:DNA binding"/>
    <property type="evidence" value="ECO:0007669"/>
    <property type="project" value="UniProtKB-KW"/>
</dbReference>
<dbReference type="GO" id="GO:0003700">
    <property type="term" value="F:DNA-binding transcription factor activity"/>
    <property type="evidence" value="ECO:0007669"/>
    <property type="project" value="InterPro"/>
</dbReference>
<dbReference type="GO" id="GO:0009086">
    <property type="term" value="P:methionine biosynthetic process"/>
    <property type="evidence" value="ECO:0007669"/>
    <property type="project" value="UniProtKB-UniRule"/>
</dbReference>
<dbReference type="GO" id="GO:0045892">
    <property type="term" value="P:negative regulation of DNA-templated transcription"/>
    <property type="evidence" value="ECO:0007669"/>
    <property type="project" value="UniProtKB-UniRule"/>
</dbReference>
<dbReference type="CDD" id="cd00490">
    <property type="entry name" value="Met_repressor_MetJ"/>
    <property type="match status" value="1"/>
</dbReference>
<dbReference type="FunFam" id="1.10.140.10:FF:000001">
    <property type="entry name" value="Met repressor"/>
    <property type="match status" value="1"/>
</dbReference>
<dbReference type="Gene3D" id="1.10.140.10">
    <property type="entry name" value="MET Apo-Repressor, subunit A"/>
    <property type="match status" value="1"/>
</dbReference>
<dbReference type="HAMAP" id="MF_00744">
    <property type="entry name" value="MetJ"/>
    <property type="match status" value="1"/>
</dbReference>
<dbReference type="InterPro" id="IPR002084">
    <property type="entry name" value="Met_repressor_MetJ"/>
</dbReference>
<dbReference type="InterPro" id="IPR023453">
    <property type="entry name" value="Met_repressor_MetJ_dom_sf"/>
</dbReference>
<dbReference type="InterPro" id="IPR010985">
    <property type="entry name" value="Ribbon_hlx_hlx"/>
</dbReference>
<dbReference type="NCBIfam" id="NF003622">
    <property type="entry name" value="PRK05264.1"/>
    <property type="match status" value="1"/>
</dbReference>
<dbReference type="Pfam" id="PF01340">
    <property type="entry name" value="MetJ"/>
    <property type="match status" value="1"/>
</dbReference>
<dbReference type="SUPFAM" id="SSF47598">
    <property type="entry name" value="Ribbon-helix-helix"/>
    <property type="match status" value="1"/>
</dbReference>